<organism>
    <name type="scientific">Pseudomonas entomophila (strain L48)</name>
    <dbReference type="NCBI Taxonomy" id="384676"/>
    <lineage>
        <taxon>Bacteria</taxon>
        <taxon>Pseudomonadati</taxon>
        <taxon>Pseudomonadota</taxon>
        <taxon>Gammaproteobacteria</taxon>
        <taxon>Pseudomonadales</taxon>
        <taxon>Pseudomonadaceae</taxon>
        <taxon>Pseudomonas</taxon>
    </lineage>
</organism>
<proteinExistence type="inferred from homology"/>
<evidence type="ECO:0000255" key="1">
    <source>
        <dbReference type="HAMAP-Rule" id="MF_01113"/>
    </source>
</evidence>
<comment type="function">
    <text evidence="1">Poorly processive, error-prone DNA polymerase involved in untargeted mutagenesis. Copies undamaged DNA at stalled replication forks, which arise in vivo from mismatched or misaligned primer ends. These misaligned primers can be extended by PolIV. Exhibits no 3'-5' exonuclease (proofreading) activity. May be involved in translesional synthesis, in conjunction with the beta clamp from PolIII.</text>
</comment>
<comment type="catalytic activity">
    <reaction evidence="1">
        <text>DNA(n) + a 2'-deoxyribonucleoside 5'-triphosphate = DNA(n+1) + diphosphate</text>
        <dbReference type="Rhea" id="RHEA:22508"/>
        <dbReference type="Rhea" id="RHEA-COMP:17339"/>
        <dbReference type="Rhea" id="RHEA-COMP:17340"/>
        <dbReference type="ChEBI" id="CHEBI:33019"/>
        <dbReference type="ChEBI" id="CHEBI:61560"/>
        <dbReference type="ChEBI" id="CHEBI:173112"/>
        <dbReference type="EC" id="2.7.7.7"/>
    </reaction>
</comment>
<comment type="cofactor">
    <cofactor evidence="1">
        <name>Mg(2+)</name>
        <dbReference type="ChEBI" id="CHEBI:18420"/>
    </cofactor>
    <text evidence="1">Binds 2 magnesium ions per subunit.</text>
</comment>
<comment type="subunit">
    <text evidence="1">Monomer.</text>
</comment>
<comment type="subcellular location">
    <subcellularLocation>
        <location evidence="1">Cytoplasm</location>
    </subcellularLocation>
</comment>
<comment type="similarity">
    <text evidence="1">Belongs to the DNA polymerase type-Y family.</text>
</comment>
<protein>
    <recommendedName>
        <fullName evidence="1">DNA polymerase IV</fullName>
        <shortName evidence="1">Pol IV</shortName>
        <ecNumber evidence="1">2.7.7.7</ecNumber>
    </recommendedName>
</protein>
<sequence>MSLRKIIHIDCDCFYAAIEMRDDPRLAGRPMAVGGQPGQRGVIATCNYEARAYGVRSAMASGHALKLCPDLEIVKPRFEAYREASRDIHTIFRDYTDLIEPLSLDEAYLDVTDSQWFAGSATRIAEDIRRRVAQQLHITVSAGVAPNKFLAKIASDWRKPNGLFVITPDQVEEFVAQLPVARLHGVGKVTADKLARLGIDTCHALRDWPRLALVREFGSFGERLWGLARGIDERAVQNDSRRQSVSVENTYDHDLPDLNSCLEKLPELLSSLNERIARMDSSYRPDKPFVKVKFHDFSQTTMEQAGAGRDLESYRQLLSQAFARGGKPVRLLGVGVRLRDLRGAHEQLELFGDI</sequence>
<feature type="chain" id="PRO_1000084913" description="DNA polymerase IV">
    <location>
        <begin position="1"/>
        <end position="354"/>
    </location>
</feature>
<feature type="domain" description="UmuC" evidence="1">
    <location>
        <begin position="6"/>
        <end position="187"/>
    </location>
</feature>
<feature type="active site" evidence="1">
    <location>
        <position position="106"/>
    </location>
</feature>
<feature type="binding site" evidence="1">
    <location>
        <position position="10"/>
    </location>
    <ligand>
        <name>Mg(2+)</name>
        <dbReference type="ChEBI" id="CHEBI:18420"/>
    </ligand>
</feature>
<feature type="binding site" evidence="1">
    <location>
        <position position="105"/>
    </location>
    <ligand>
        <name>Mg(2+)</name>
        <dbReference type="ChEBI" id="CHEBI:18420"/>
    </ligand>
</feature>
<feature type="site" description="Substrate discrimination" evidence="1">
    <location>
        <position position="15"/>
    </location>
</feature>
<reference key="1">
    <citation type="journal article" date="2006" name="Nat. Biotechnol.">
        <title>Complete genome sequence of the entomopathogenic and metabolically versatile soil bacterium Pseudomonas entomophila.</title>
        <authorList>
            <person name="Vodovar N."/>
            <person name="Vallenet D."/>
            <person name="Cruveiller S."/>
            <person name="Rouy Z."/>
            <person name="Barbe V."/>
            <person name="Acosta C."/>
            <person name="Cattolico L."/>
            <person name="Jubin C."/>
            <person name="Lajus A."/>
            <person name="Segurens B."/>
            <person name="Vacherie B."/>
            <person name="Wincker P."/>
            <person name="Weissenbach J."/>
            <person name="Lemaitre B."/>
            <person name="Medigue C."/>
            <person name="Boccard F."/>
        </authorList>
    </citation>
    <scope>NUCLEOTIDE SEQUENCE [LARGE SCALE GENOMIC DNA]</scope>
    <source>
        <strain>L48</strain>
    </source>
</reference>
<dbReference type="EC" id="2.7.7.7" evidence="1"/>
<dbReference type="EMBL" id="CT573326">
    <property type="protein sequence ID" value="CAK16800.1"/>
    <property type="molecule type" value="Genomic_DNA"/>
</dbReference>
<dbReference type="SMR" id="Q1I6D5"/>
<dbReference type="STRING" id="384676.PSEEN4107"/>
<dbReference type="KEGG" id="pen:PSEEN4107"/>
<dbReference type="eggNOG" id="COG0389">
    <property type="taxonomic scope" value="Bacteria"/>
</dbReference>
<dbReference type="HOGENOM" id="CLU_012348_1_2_6"/>
<dbReference type="OrthoDB" id="9808813at2"/>
<dbReference type="Proteomes" id="UP000000658">
    <property type="component" value="Chromosome"/>
</dbReference>
<dbReference type="GO" id="GO:0005829">
    <property type="term" value="C:cytosol"/>
    <property type="evidence" value="ECO:0007669"/>
    <property type="project" value="TreeGrafter"/>
</dbReference>
<dbReference type="GO" id="GO:0003684">
    <property type="term" value="F:damaged DNA binding"/>
    <property type="evidence" value="ECO:0007669"/>
    <property type="project" value="InterPro"/>
</dbReference>
<dbReference type="GO" id="GO:0003887">
    <property type="term" value="F:DNA-directed DNA polymerase activity"/>
    <property type="evidence" value="ECO:0007669"/>
    <property type="project" value="UniProtKB-UniRule"/>
</dbReference>
<dbReference type="GO" id="GO:0000287">
    <property type="term" value="F:magnesium ion binding"/>
    <property type="evidence" value="ECO:0007669"/>
    <property type="project" value="UniProtKB-UniRule"/>
</dbReference>
<dbReference type="GO" id="GO:0006261">
    <property type="term" value="P:DNA-templated DNA replication"/>
    <property type="evidence" value="ECO:0007669"/>
    <property type="project" value="UniProtKB-UniRule"/>
</dbReference>
<dbReference type="GO" id="GO:0042276">
    <property type="term" value="P:error-prone translesion synthesis"/>
    <property type="evidence" value="ECO:0007669"/>
    <property type="project" value="TreeGrafter"/>
</dbReference>
<dbReference type="GO" id="GO:0009432">
    <property type="term" value="P:SOS response"/>
    <property type="evidence" value="ECO:0007669"/>
    <property type="project" value="TreeGrafter"/>
</dbReference>
<dbReference type="CDD" id="cd03586">
    <property type="entry name" value="PolY_Pol_IV_kappa"/>
    <property type="match status" value="1"/>
</dbReference>
<dbReference type="FunFam" id="1.10.150.20:FF:000019">
    <property type="entry name" value="DNA polymerase IV"/>
    <property type="match status" value="1"/>
</dbReference>
<dbReference type="FunFam" id="3.30.70.270:FF:000002">
    <property type="entry name" value="DNA polymerase IV"/>
    <property type="match status" value="1"/>
</dbReference>
<dbReference type="FunFam" id="3.40.1170.60:FF:000001">
    <property type="entry name" value="DNA polymerase IV"/>
    <property type="match status" value="1"/>
</dbReference>
<dbReference type="Gene3D" id="3.30.70.270">
    <property type="match status" value="1"/>
</dbReference>
<dbReference type="Gene3D" id="3.40.1170.60">
    <property type="match status" value="1"/>
</dbReference>
<dbReference type="Gene3D" id="1.10.150.20">
    <property type="entry name" value="5' to 3' exonuclease, C-terminal subdomain"/>
    <property type="match status" value="1"/>
</dbReference>
<dbReference type="Gene3D" id="3.30.1490.100">
    <property type="entry name" value="DNA polymerase, Y-family, little finger domain"/>
    <property type="match status" value="1"/>
</dbReference>
<dbReference type="HAMAP" id="MF_01113">
    <property type="entry name" value="DNApol_IV"/>
    <property type="match status" value="1"/>
</dbReference>
<dbReference type="InterPro" id="IPR043502">
    <property type="entry name" value="DNA/RNA_pol_sf"/>
</dbReference>
<dbReference type="InterPro" id="IPR036775">
    <property type="entry name" value="DNA_pol_Y-fam_lit_finger_sf"/>
</dbReference>
<dbReference type="InterPro" id="IPR017961">
    <property type="entry name" value="DNA_pol_Y-fam_little_finger"/>
</dbReference>
<dbReference type="InterPro" id="IPR050116">
    <property type="entry name" value="DNA_polymerase-Y"/>
</dbReference>
<dbReference type="InterPro" id="IPR022880">
    <property type="entry name" value="DNApol_IV"/>
</dbReference>
<dbReference type="InterPro" id="IPR053848">
    <property type="entry name" value="IMS_HHH_1"/>
</dbReference>
<dbReference type="InterPro" id="IPR043128">
    <property type="entry name" value="Rev_trsase/Diguanyl_cyclase"/>
</dbReference>
<dbReference type="InterPro" id="IPR001126">
    <property type="entry name" value="UmuC"/>
</dbReference>
<dbReference type="NCBIfam" id="NF002677">
    <property type="entry name" value="PRK02406.1"/>
    <property type="match status" value="1"/>
</dbReference>
<dbReference type="PANTHER" id="PTHR11076:SF33">
    <property type="entry name" value="DNA POLYMERASE KAPPA"/>
    <property type="match status" value="1"/>
</dbReference>
<dbReference type="PANTHER" id="PTHR11076">
    <property type="entry name" value="DNA REPAIR POLYMERASE UMUC / TRANSFERASE FAMILY MEMBER"/>
    <property type="match status" value="1"/>
</dbReference>
<dbReference type="Pfam" id="PF00817">
    <property type="entry name" value="IMS"/>
    <property type="match status" value="1"/>
</dbReference>
<dbReference type="Pfam" id="PF11799">
    <property type="entry name" value="IMS_C"/>
    <property type="match status" value="1"/>
</dbReference>
<dbReference type="Pfam" id="PF21999">
    <property type="entry name" value="IMS_HHH_1"/>
    <property type="match status" value="1"/>
</dbReference>
<dbReference type="SUPFAM" id="SSF56672">
    <property type="entry name" value="DNA/RNA polymerases"/>
    <property type="match status" value="1"/>
</dbReference>
<dbReference type="SUPFAM" id="SSF100879">
    <property type="entry name" value="Lesion bypass DNA polymerase (Y-family), little finger domain"/>
    <property type="match status" value="1"/>
</dbReference>
<dbReference type="PROSITE" id="PS50173">
    <property type="entry name" value="UMUC"/>
    <property type="match status" value="1"/>
</dbReference>
<keyword id="KW-0963">Cytoplasm</keyword>
<keyword id="KW-0227">DNA damage</keyword>
<keyword id="KW-0234">DNA repair</keyword>
<keyword id="KW-0235">DNA replication</keyword>
<keyword id="KW-0238">DNA-binding</keyword>
<keyword id="KW-0239">DNA-directed DNA polymerase</keyword>
<keyword id="KW-0460">Magnesium</keyword>
<keyword id="KW-0479">Metal-binding</keyword>
<keyword id="KW-0515">Mutator protein</keyword>
<keyword id="KW-0548">Nucleotidyltransferase</keyword>
<keyword id="KW-0808">Transferase</keyword>
<accession>Q1I6D5</accession>
<gene>
    <name evidence="1" type="primary">dinB</name>
    <name type="ordered locus">PSEEN4107</name>
</gene>
<name>DPO4_PSEE4</name>